<evidence type="ECO:0000255" key="1">
    <source>
        <dbReference type="PROSITE-ProRule" id="PRU01182"/>
    </source>
</evidence>
<evidence type="ECO:0000305" key="2"/>
<gene>
    <name type="ordered locus">BP1235</name>
</gene>
<keyword id="KW-0378">Hydrolase</keyword>
<keyword id="KW-0479">Metal-binding</keyword>
<keyword id="KW-0482">Metalloprotease</keyword>
<keyword id="KW-0645">Protease</keyword>
<keyword id="KW-1185">Reference proteome</keyword>
<keyword id="KW-0862">Zinc</keyword>
<proteinExistence type="inferred from homology"/>
<reference key="1">
    <citation type="journal article" date="2003" name="Nat. Genet.">
        <title>Comparative analysis of the genome sequences of Bordetella pertussis, Bordetella parapertussis and Bordetella bronchiseptica.</title>
        <authorList>
            <person name="Parkhill J."/>
            <person name="Sebaihia M."/>
            <person name="Preston A."/>
            <person name="Murphy L.D."/>
            <person name="Thomson N.R."/>
            <person name="Harris D.E."/>
            <person name="Holden M.T.G."/>
            <person name="Churcher C.M."/>
            <person name="Bentley S.D."/>
            <person name="Mungall K.L."/>
            <person name="Cerdeno-Tarraga A.-M."/>
            <person name="Temple L."/>
            <person name="James K.D."/>
            <person name="Harris B."/>
            <person name="Quail M.A."/>
            <person name="Achtman M."/>
            <person name="Atkin R."/>
            <person name="Baker S."/>
            <person name="Basham D."/>
            <person name="Bason N."/>
            <person name="Cherevach I."/>
            <person name="Chillingworth T."/>
            <person name="Collins M."/>
            <person name="Cronin A."/>
            <person name="Davis P."/>
            <person name="Doggett J."/>
            <person name="Feltwell T."/>
            <person name="Goble A."/>
            <person name="Hamlin N."/>
            <person name="Hauser H."/>
            <person name="Holroyd S."/>
            <person name="Jagels K."/>
            <person name="Leather S."/>
            <person name="Moule S."/>
            <person name="Norberczak H."/>
            <person name="O'Neil S."/>
            <person name="Ormond D."/>
            <person name="Price C."/>
            <person name="Rabbinowitsch E."/>
            <person name="Rutter S."/>
            <person name="Sanders M."/>
            <person name="Saunders D."/>
            <person name="Seeger K."/>
            <person name="Sharp S."/>
            <person name="Simmonds M."/>
            <person name="Skelton J."/>
            <person name="Squares R."/>
            <person name="Squares S."/>
            <person name="Stevens K."/>
            <person name="Unwin L."/>
            <person name="Whitehead S."/>
            <person name="Barrell B.G."/>
            <person name="Maskell D.J."/>
        </authorList>
    </citation>
    <scope>NUCLEOTIDE SEQUENCE [LARGE SCALE GENOMIC DNA]</scope>
    <source>
        <strain>Tohama I / ATCC BAA-589 / NCTC 13251</strain>
    </source>
</reference>
<protein>
    <recommendedName>
        <fullName>UPF0758 protein BP1235</fullName>
    </recommendedName>
</protein>
<feature type="chain" id="PRO_0000190686" description="UPF0758 protein BP1235">
    <location>
        <begin position="1"/>
        <end position="225"/>
    </location>
</feature>
<feature type="domain" description="MPN" evidence="1">
    <location>
        <begin position="103"/>
        <end position="225"/>
    </location>
</feature>
<feature type="short sequence motif" description="JAMM motif" evidence="1">
    <location>
        <begin position="174"/>
        <end position="187"/>
    </location>
</feature>
<feature type="binding site" evidence="1">
    <location>
        <position position="174"/>
    </location>
    <ligand>
        <name>Zn(2+)</name>
        <dbReference type="ChEBI" id="CHEBI:29105"/>
        <note>catalytic</note>
    </ligand>
</feature>
<feature type="binding site" evidence="1">
    <location>
        <position position="176"/>
    </location>
    <ligand>
        <name>Zn(2+)</name>
        <dbReference type="ChEBI" id="CHEBI:29105"/>
        <note>catalytic</note>
    </ligand>
</feature>
<feature type="binding site" evidence="1">
    <location>
        <position position="187"/>
    </location>
    <ligand>
        <name>Zn(2+)</name>
        <dbReference type="ChEBI" id="CHEBI:29105"/>
        <note>catalytic</note>
    </ligand>
</feature>
<comment type="similarity">
    <text evidence="2">Belongs to the UPF0758 family.</text>
</comment>
<name>Y1235_BORPE</name>
<sequence length="225" mass="24147">MSLPEPLLRADWPRERLLRHGAATLSDPELLALALRTGVAGCNAVQLGHDLLRRFGGLRGLLGTSPAELQVVPGLGTAKACVLAAVLELARRTLEEDLVRQDALANPDLVRRYCQAALGHRKVEHCIALYLDARLKLIICAEVARGTLTQAQIYPREIVREALRHHAAALILTHNHPGGTAAASAADIAMTRQIRQALALIDVRLIDHVIVAGAATVSMAAQGHL</sequence>
<dbReference type="EMBL" id="BX640414">
    <property type="protein sequence ID" value="CAE41531.1"/>
    <property type="molecule type" value="Genomic_DNA"/>
</dbReference>
<dbReference type="RefSeq" id="NP_880007.1">
    <property type="nucleotide sequence ID" value="NC_002929.2"/>
</dbReference>
<dbReference type="SMR" id="Q7VYS4"/>
<dbReference type="STRING" id="257313.BP1235"/>
<dbReference type="PaxDb" id="257313-BP1235"/>
<dbReference type="KEGG" id="bpe:BP1235"/>
<dbReference type="PATRIC" id="fig|257313.5.peg.1331"/>
<dbReference type="eggNOG" id="COG2003">
    <property type="taxonomic scope" value="Bacteria"/>
</dbReference>
<dbReference type="HOGENOM" id="CLU_073529_0_1_4"/>
<dbReference type="Proteomes" id="UP000002676">
    <property type="component" value="Chromosome"/>
</dbReference>
<dbReference type="GO" id="GO:0046872">
    <property type="term" value="F:metal ion binding"/>
    <property type="evidence" value="ECO:0007669"/>
    <property type="project" value="UniProtKB-KW"/>
</dbReference>
<dbReference type="GO" id="GO:0008237">
    <property type="term" value="F:metallopeptidase activity"/>
    <property type="evidence" value="ECO:0007669"/>
    <property type="project" value="UniProtKB-KW"/>
</dbReference>
<dbReference type="GO" id="GO:0006508">
    <property type="term" value="P:proteolysis"/>
    <property type="evidence" value="ECO:0007669"/>
    <property type="project" value="UniProtKB-KW"/>
</dbReference>
<dbReference type="CDD" id="cd08071">
    <property type="entry name" value="MPN_DUF2466"/>
    <property type="match status" value="1"/>
</dbReference>
<dbReference type="Gene3D" id="3.40.140.10">
    <property type="entry name" value="Cytidine Deaminase, domain 2"/>
    <property type="match status" value="1"/>
</dbReference>
<dbReference type="InterPro" id="IPR037518">
    <property type="entry name" value="MPN"/>
</dbReference>
<dbReference type="InterPro" id="IPR025657">
    <property type="entry name" value="RadC_JAB"/>
</dbReference>
<dbReference type="InterPro" id="IPR010994">
    <property type="entry name" value="RuvA_2-like"/>
</dbReference>
<dbReference type="InterPro" id="IPR001405">
    <property type="entry name" value="UPF0758"/>
</dbReference>
<dbReference type="InterPro" id="IPR046778">
    <property type="entry name" value="UPF0758_N"/>
</dbReference>
<dbReference type="NCBIfam" id="NF000642">
    <property type="entry name" value="PRK00024.1"/>
    <property type="match status" value="1"/>
</dbReference>
<dbReference type="NCBIfam" id="TIGR00608">
    <property type="entry name" value="radc"/>
    <property type="match status" value="1"/>
</dbReference>
<dbReference type="PANTHER" id="PTHR30471">
    <property type="entry name" value="DNA REPAIR PROTEIN RADC"/>
    <property type="match status" value="1"/>
</dbReference>
<dbReference type="PANTHER" id="PTHR30471:SF3">
    <property type="entry name" value="UPF0758 PROTEIN YEES-RELATED"/>
    <property type="match status" value="1"/>
</dbReference>
<dbReference type="Pfam" id="PF04002">
    <property type="entry name" value="RadC"/>
    <property type="match status" value="1"/>
</dbReference>
<dbReference type="Pfam" id="PF20582">
    <property type="entry name" value="UPF0758_N"/>
    <property type="match status" value="1"/>
</dbReference>
<dbReference type="SUPFAM" id="SSF47781">
    <property type="entry name" value="RuvA domain 2-like"/>
    <property type="match status" value="1"/>
</dbReference>
<dbReference type="PROSITE" id="PS50249">
    <property type="entry name" value="MPN"/>
    <property type="match status" value="1"/>
</dbReference>
<accession>Q7VYS4</accession>
<organism>
    <name type="scientific">Bordetella pertussis (strain Tohama I / ATCC BAA-589 / NCTC 13251)</name>
    <dbReference type="NCBI Taxonomy" id="257313"/>
    <lineage>
        <taxon>Bacteria</taxon>
        <taxon>Pseudomonadati</taxon>
        <taxon>Pseudomonadota</taxon>
        <taxon>Betaproteobacteria</taxon>
        <taxon>Burkholderiales</taxon>
        <taxon>Alcaligenaceae</taxon>
        <taxon>Bordetella</taxon>
    </lineage>
</organism>